<name>PKP3_MOUSE</name>
<feature type="chain" id="PRO_0000064288" description="Plakophilin-3">
    <location>
        <begin position="1"/>
        <end position="797"/>
    </location>
</feature>
<feature type="repeat" description="ARM 1">
    <location>
        <begin position="305"/>
        <end position="348"/>
    </location>
</feature>
<feature type="repeat" description="ARM 2">
    <location>
        <begin position="351"/>
        <end position="390"/>
    </location>
</feature>
<feature type="repeat" description="ARM 3">
    <location>
        <begin position="393"/>
        <end position="432"/>
    </location>
</feature>
<feature type="repeat" description="ARM 4">
    <location>
        <begin position="449"/>
        <end position="487"/>
    </location>
</feature>
<feature type="repeat" description="ARM 5">
    <location>
        <begin position="491"/>
        <end position="536"/>
    </location>
</feature>
<feature type="repeat" description="ARM 6">
    <location>
        <begin position="596"/>
        <end position="637"/>
    </location>
</feature>
<feature type="repeat" description="ARM 7">
    <location>
        <begin position="645"/>
        <end position="684"/>
    </location>
</feature>
<feature type="repeat" description="ARM 8">
    <location>
        <begin position="689"/>
        <end position="730"/>
    </location>
</feature>
<feature type="region of interest" description="Disordered" evidence="2">
    <location>
        <begin position="58"/>
        <end position="81"/>
    </location>
</feature>
<feature type="region of interest" description="Disordered" evidence="2">
    <location>
        <begin position="219"/>
        <end position="241"/>
    </location>
</feature>
<feature type="region of interest" description="Disordered" evidence="2">
    <location>
        <begin position="253"/>
        <end position="274"/>
    </location>
</feature>
<feature type="region of interest" description="Required for interaction with SFN" evidence="1">
    <location>
        <begin position="283"/>
        <end position="288"/>
    </location>
</feature>
<feature type="region of interest" description="Required for interaction with GSK3B" evidence="1">
    <location>
        <begin position="294"/>
        <end position="724"/>
    </location>
</feature>
<feature type="region of interest" description="Required for binding to PKP2 mRNA" evidence="1">
    <location>
        <begin position="516"/>
        <end position="797"/>
    </location>
</feature>
<feature type="compositionally biased region" description="Low complexity" evidence="2">
    <location>
        <begin position="219"/>
        <end position="228"/>
    </location>
</feature>
<feature type="site" description="Interacts with SFN" evidence="1">
    <location>
        <position position="285"/>
    </location>
</feature>
<feature type="modified residue" description="Omega-N-methylarginine" evidence="1">
    <location>
        <position position="81"/>
    </location>
</feature>
<feature type="modified residue" description="Phosphoserine" evidence="13">
    <location>
        <position position="123"/>
    </location>
</feature>
<feature type="modified residue" description="Phosphoserine" evidence="13">
    <location>
        <position position="180"/>
    </location>
</feature>
<feature type="modified residue" description="Phosphoserine" evidence="1">
    <location>
        <position position="183"/>
    </location>
</feature>
<feature type="modified residue" description="Phosphotyrosine" evidence="1">
    <location>
        <position position="195"/>
    </location>
</feature>
<feature type="modified residue" description="Phosphoserine" evidence="1">
    <location>
        <position position="240"/>
    </location>
</feature>
<feature type="modified residue" description="Phosphothreonine" evidence="1">
    <location>
        <position position="250"/>
    </location>
</feature>
<feature type="modified residue" description="Omega-N-methylarginine" evidence="14">
    <location>
        <position position="261"/>
    </location>
</feature>
<feature type="modified residue" description="Phosphoserine" evidence="1">
    <location>
        <position position="285"/>
    </location>
</feature>
<feature type="modified residue" description="Phosphoserine" evidence="1">
    <location>
        <position position="313"/>
    </location>
</feature>
<feature type="modified residue" description="Phosphoserine" evidence="1">
    <location>
        <position position="314"/>
    </location>
</feature>
<feature type="modified residue" description="Phosphoserine" evidence="13">
    <location>
        <position position="331"/>
    </location>
</feature>
<feature type="splice variant" id="VSP_026139" description="In isoform 2." evidence="11">
    <original>MQEGNFLLSALQ</original>
    <variation>MEPTAGSRTRMEPRRNCPTAGTSRMSQGASGGQTSGK</variation>
    <location>
        <begin position="1"/>
        <end position="12"/>
    </location>
</feature>
<feature type="sequence conflict" description="In Ref. 1; AAD55892." evidence="12" ref="1">
    <original>R</original>
    <variation>P</variation>
    <location>
        <position position="182"/>
    </location>
</feature>
<feature type="sequence conflict" description="In Ref. 1; AAD55892." evidence="12" ref="1">
    <original>E</original>
    <variation>K</variation>
    <location>
        <position position="216"/>
    </location>
</feature>
<feature type="sequence conflict" description="In Ref. 1; AAD55892." evidence="12" ref="1">
    <original>A</original>
    <variation>P</variation>
    <location>
        <position position="459"/>
    </location>
</feature>
<dbReference type="EMBL" id="AF136719">
    <property type="protein sequence ID" value="AAD55892.1"/>
    <property type="molecule type" value="mRNA"/>
</dbReference>
<dbReference type="EMBL" id="BC090668">
    <property type="protein sequence ID" value="AAH90668.1"/>
    <property type="molecule type" value="mRNA"/>
</dbReference>
<dbReference type="EMBL" id="BC106141">
    <property type="protein sequence ID" value="AAI06142.1"/>
    <property type="molecule type" value="mRNA"/>
</dbReference>
<dbReference type="EMBL" id="BC139775">
    <property type="protein sequence ID" value="AAI39776.1"/>
    <property type="molecule type" value="mRNA"/>
</dbReference>
<dbReference type="CCDS" id="CCDS21999.1">
    <molecule id="Q9QY23-1"/>
</dbReference>
<dbReference type="CCDS" id="CCDS52437.1">
    <molecule id="Q9QY23-2"/>
</dbReference>
<dbReference type="RefSeq" id="NP_001156396.1">
    <molecule id="Q9QY23-2"/>
    <property type="nucleotide sequence ID" value="NM_001162924.2"/>
</dbReference>
<dbReference type="RefSeq" id="NP_062736.2">
    <molecule id="Q9QY23-1"/>
    <property type="nucleotide sequence ID" value="NM_019762.2"/>
</dbReference>
<dbReference type="SMR" id="Q9QY23"/>
<dbReference type="BioGRID" id="207999">
    <property type="interactions" value="6"/>
</dbReference>
<dbReference type="FunCoup" id="Q9QY23">
    <property type="interactions" value="202"/>
</dbReference>
<dbReference type="IntAct" id="Q9QY23">
    <property type="interactions" value="2"/>
</dbReference>
<dbReference type="STRING" id="10090.ENSMUSP00000101654"/>
<dbReference type="GlyGen" id="Q9QY23">
    <property type="glycosylation" value="1 site"/>
</dbReference>
<dbReference type="iPTMnet" id="Q9QY23"/>
<dbReference type="PhosphoSitePlus" id="Q9QY23"/>
<dbReference type="PaxDb" id="10090-ENSMUSP00000101654"/>
<dbReference type="PeptideAtlas" id="Q9QY23"/>
<dbReference type="ProteomicsDB" id="289754">
    <molecule id="Q9QY23-1"/>
</dbReference>
<dbReference type="ProteomicsDB" id="289755">
    <molecule id="Q9QY23-2"/>
</dbReference>
<dbReference type="Antibodypedia" id="4571">
    <property type="antibodies" value="291 antibodies from 34 providers"/>
</dbReference>
<dbReference type="DNASU" id="56460"/>
<dbReference type="Ensembl" id="ENSMUST00000066873.5">
    <molecule id="Q9QY23-1"/>
    <property type="protein sequence ID" value="ENSMUSP00000069961.5"/>
    <property type="gene ID" value="ENSMUSG00000054065.13"/>
</dbReference>
<dbReference type="Ensembl" id="ENSMUST00000106039.9">
    <molecule id="Q9QY23-2"/>
    <property type="protein sequence ID" value="ENSMUSP00000101654.3"/>
    <property type="gene ID" value="ENSMUSG00000054065.13"/>
</dbReference>
<dbReference type="GeneID" id="56460"/>
<dbReference type="KEGG" id="mmu:56460"/>
<dbReference type="UCSC" id="uc009kjh.2">
    <molecule id="Q9QY23-2"/>
    <property type="organism name" value="mouse"/>
</dbReference>
<dbReference type="UCSC" id="uc009kji.2">
    <molecule id="Q9QY23-1"/>
    <property type="organism name" value="mouse"/>
</dbReference>
<dbReference type="AGR" id="MGI:1891830"/>
<dbReference type="CTD" id="11187"/>
<dbReference type="MGI" id="MGI:1891830">
    <property type="gene designation" value="Pkp3"/>
</dbReference>
<dbReference type="VEuPathDB" id="HostDB:ENSMUSG00000054065"/>
<dbReference type="eggNOG" id="KOG1048">
    <property type="taxonomic scope" value="Eukaryota"/>
</dbReference>
<dbReference type="GeneTree" id="ENSGT00940000159515"/>
<dbReference type="HOGENOM" id="CLU_009111_2_0_1"/>
<dbReference type="InParanoid" id="Q9QY23"/>
<dbReference type="OMA" id="YAFERQM"/>
<dbReference type="OrthoDB" id="57867at9989"/>
<dbReference type="PhylomeDB" id="Q9QY23"/>
<dbReference type="TreeFam" id="TF321877"/>
<dbReference type="Reactome" id="R-MMU-6805567">
    <property type="pathway name" value="Keratinization"/>
</dbReference>
<dbReference type="Reactome" id="R-MMU-6809371">
    <property type="pathway name" value="Formation of the cornified envelope"/>
</dbReference>
<dbReference type="BioGRID-ORCS" id="56460">
    <property type="hits" value="0 hits in 78 CRISPR screens"/>
</dbReference>
<dbReference type="ChiTaRS" id="Pkp3">
    <property type="organism name" value="mouse"/>
</dbReference>
<dbReference type="PRO" id="PR:Q9QY23"/>
<dbReference type="Proteomes" id="UP000000589">
    <property type="component" value="Chromosome 7"/>
</dbReference>
<dbReference type="RNAct" id="Q9QY23">
    <property type="molecule type" value="protein"/>
</dbReference>
<dbReference type="Bgee" id="ENSMUSG00000054065">
    <property type="expression patterns" value="Expressed in lip and 176 other cell types or tissues"/>
</dbReference>
<dbReference type="ExpressionAtlas" id="Q9QY23">
    <property type="expression patterns" value="baseline and differential"/>
</dbReference>
<dbReference type="GO" id="GO:0005912">
    <property type="term" value="C:adherens junction"/>
    <property type="evidence" value="ECO:0000314"/>
    <property type="project" value="UniProtKB"/>
</dbReference>
<dbReference type="GO" id="GO:0005911">
    <property type="term" value="C:cell-cell junction"/>
    <property type="evidence" value="ECO:0000314"/>
    <property type="project" value="UniProtKB"/>
</dbReference>
<dbReference type="GO" id="GO:0001533">
    <property type="term" value="C:cornified envelope"/>
    <property type="evidence" value="ECO:0000314"/>
    <property type="project" value="MGI"/>
</dbReference>
<dbReference type="GO" id="GO:0005737">
    <property type="term" value="C:cytoplasm"/>
    <property type="evidence" value="ECO:0000314"/>
    <property type="project" value="UniProtKB"/>
</dbReference>
<dbReference type="GO" id="GO:0030057">
    <property type="term" value="C:desmosome"/>
    <property type="evidence" value="ECO:0000314"/>
    <property type="project" value="UniProtKB"/>
</dbReference>
<dbReference type="GO" id="GO:0005654">
    <property type="term" value="C:nucleoplasm"/>
    <property type="evidence" value="ECO:0007669"/>
    <property type="project" value="Ensembl"/>
</dbReference>
<dbReference type="GO" id="GO:0005634">
    <property type="term" value="C:nucleus"/>
    <property type="evidence" value="ECO:0000250"/>
    <property type="project" value="UniProtKB"/>
</dbReference>
<dbReference type="GO" id="GO:0005914">
    <property type="term" value="C:spot adherens junction"/>
    <property type="evidence" value="ECO:0000250"/>
    <property type="project" value="MGI"/>
</dbReference>
<dbReference type="GO" id="GO:0045294">
    <property type="term" value="F:alpha-catenin binding"/>
    <property type="evidence" value="ECO:0007669"/>
    <property type="project" value="Ensembl"/>
</dbReference>
<dbReference type="GO" id="GO:0050839">
    <property type="term" value="F:cell adhesion molecule binding"/>
    <property type="evidence" value="ECO:0007669"/>
    <property type="project" value="Ensembl"/>
</dbReference>
<dbReference type="GO" id="GO:0019899">
    <property type="term" value="F:enzyme binding"/>
    <property type="evidence" value="ECO:0007669"/>
    <property type="project" value="Ensembl"/>
</dbReference>
<dbReference type="GO" id="GO:0003723">
    <property type="term" value="F:RNA binding"/>
    <property type="evidence" value="ECO:0007669"/>
    <property type="project" value="UniProtKB-KW"/>
</dbReference>
<dbReference type="GO" id="GO:0030036">
    <property type="term" value="P:actin cytoskeleton organization"/>
    <property type="evidence" value="ECO:0000315"/>
    <property type="project" value="UniProtKB"/>
</dbReference>
<dbReference type="GO" id="GO:0002159">
    <property type="term" value="P:desmosome assembly"/>
    <property type="evidence" value="ECO:0000315"/>
    <property type="project" value="UniProtKB"/>
</dbReference>
<dbReference type="GO" id="GO:0002934">
    <property type="term" value="P:desmosome organization"/>
    <property type="evidence" value="ECO:0000315"/>
    <property type="project" value="UniProtKB"/>
</dbReference>
<dbReference type="GO" id="GO:0090136">
    <property type="term" value="P:epithelial cell-cell adhesion"/>
    <property type="evidence" value="ECO:0000315"/>
    <property type="project" value="UniProtKB"/>
</dbReference>
<dbReference type="GO" id="GO:0010669">
    <property type="term" value="P:epithelial structure maintenance"/>
    <property type="evidence" value="ECO:0000315"/>
    <property type="project" value="UniProtKB"/>
</dbReference>
<dbReference type="GO" id="GO:1902373">
    <property type="term" value="P:negative regulation of mRNA catabolic process"/>
    <property type="evidence" value="ECO:0007669"/>
    <property type="project" value="Ensembl"/>
</dbReference>
<dbReference type="GO" id="GO:0045785">
    <property type="term" value="P:positive regulation of cell adhesion"/>
    <property type="evidence" value="ECO:0000250"/>
    <property type="project" value="UniProtKB"/>
</dbReference>
<dbReference type="GO" id="GO:1902808">
    <property type="term" value="P:positive regulation of cell cycle G1/S phase transition"/>
    <property type="evidence" value="ECO:0000315"/>
    <property type="project" value="UniProtKB"/>
</dbReference>
<dbReference type="GO" id="GO:0022409">
    <property type="term" value="P:positive regulation of cell-cell adhesion"/>
    <property type="evidence" value="ECO:0000315"/>
    <property type="project" value="UniProtKB"/>
</dbReference>
<dbReference type="GO" id="GO:1903829">
    <property type="term" value="P:positive regulation of protein localization"/>
    <property type="evidence" value="ECO:0000315"/>
    <property type="project" value="UniProtKB"/>
</dbReference>
<dbReference type="GO" id="GO:0072659">
    <property type="term" value="P:protein localization to plasma membrane"/>
    <property type="evidence" value="ECO:0007669"/>
    <property type="project" value="Ensembl"/>
</dbReference>
<dbReference type="GO" id="GO:0002718">
    <property type="term" value="P:regulation of cytokine production involved in immune response"/>
    <property type="evidence" value="ECO:0000315"/>
    <property type="project" value="UniProtKB"/>
</dbReference>
<dbReference type="GO" id="GO:0051797">
    <property type="term" value="P:regulation of hair follicle development"/>
    <property type="evidence" value="ECO:0000315"/>
    <property type="project" value="UniProtKB"/>
</dbReference>
<dbReference type="FunFam" id="1.25.10.10:FF:000199">
    <property type="entry name" value="plakophilin-3"/>
    <property type="match status" value="1"/>
</dbReference>
<dbReference type="Gene3D" id="1.25.10.10">
    <property type="entry name" value="Leucine-rich Repeat Variant"/>
    <property type="match status" value="1"/>
</dbReference>
<dbReference type="InterPro" id="IPR011989">
    <property type="entry name" value="ARM-like"/>
</dbReference>
<dbReference type="InterPro" id="IPR016024">
    <property type="entry name" value="ARM-type_fold"/>
</dbReference>
<dbReference type="InterPro" id="IPR000225">
    <property type="entry name" value="Armadillo"/>
</dbReference>
<dbReference type="InterPro" id="IPR028435">
    <property type="entry name" value="Plakophilin/d_Catenin"/>
</dbReference>
<dbReference type="PANTHER" id="PTHR10372:SF1">
    <property type="entry name" value="PLAKOPHILIN-3"/>
    <property type="match status" value="1"/>
</dbReference>
<dbReference type="PANTHER" id="PTHR10372">
    <property type="entry name" value="PLAKOPHILLIN-RELATED"/>
    <property type="match status" value="1"/>
</dbReference>
<dbReference type="Pfam" id="PF00514">
    <property type="entry name" value="Arm"/>
    <property type="match status" value="2"/>
</dbReference>
<dbReference type="SMART" id="SM00185">
    <property type="entry name" value="ARM"/>
    <property type="match status" value="4"/>
</dbReference>
<dbReference type="SUPFAM" id="SSF48371">
    <property type="entry name" value="ARM repeat"/>
    <property type="match status" value="1"/>
</dbReference>
<dbReference type="PROSITE" id="PS50176">
    <property type="entry name" value="ARM_REPEAT"/>
    <property type="match status" value="1"/>
</dbReference>
<accession>Q9QY23</accession>
<accession>A4QPD8</accession>
<accession>Q0VGP3</accession>
<accession>Q3KQL7</accession>
<keyword id="KW-0025">Alternative splicing</keyword>
<keyword id="KW-0130">Cell adhesion</keyword>
<keyword id="KW-0965">Cell junction</keyword>
<keyword id="KW-1003">Cell membrane</keyword>
<keyword id="KW-0963">Cytoplasm</keyword>
<keyword id="KW-0472">Membrane</keyword>
<keyword id="KW-0488">Methylation</keyword>
<keyword id="KW-0539">Nucleus</keyword>
<keyword id="KW-0597">Phosphoprotein</keyword>
<keyword id="KW-1185">Reference proteome</keyword>
<keyword id="KW-0677">Repeat</keyword>
<keyword id="KW-0694">RNA-binding</keyword>
<gene>
    <name type="primary">Pkp3</name>
</gene>
<protein>
    <recommendedName>
        <fullName>Plakophilin-3</fullName>
    </recommendedName>
</protein>
<proteinExistence type="evidence at protein level"/>
<evidence type="ECO:0000250" key="1">
    <source>
        <dbReference type="UniProtKB" id="Q9Y446"/>
    </source>
</evidence>
<evidence type="ECO:0000256" key="2">
    <source>
        <dbReference type="SAM" id="MobiDB-lite"/>
    </source>
</evidence>
<evidence type="ECO:0000269" key="3">
    <source>
    </source>
</evidence>
<evidence type="ECO:0000269" key="4">
    <source>
    </source>
</evidence>
<evidence type="ECO:0000269" key="5">
    <source>
    </source>
</evidence>
<evidence type="ECO:0000269" key="6">
    <source>
    </source>
</evidence>
<evidence type="ECO:0000269" key="7">
    <source>
    </source>
</evidence>
<evidence type="ECO:0000269" key="8">
    <source>
    </source>
</evidence>
<evidence type="ECO:0000269" key="9">
    <source>
    </source>
</evidence>
<evidence type="ECO:0000269" key="10">
    <source>
    </source>
</evidence>
<evidence type="ECO:0000303" key="11">
    <source>
    </source>
</evidence>
<evidence type="ECO:0000305" key="12"/>
<evidence type="ECO:0007744" key="13">
    <source>
    </source>
</evidence>
<evidence type="ECO:0007744" key="14">
    <source>
    </source>
</evidence>
<comment type="function">
    <text evidence="1 3 4 6 7 8 9">A component of desmosome cell-cell junctions which are required for positive regulation of cellular adhesion (By similarity). Required for the localization of DSG2, DSP and PKP2 to mature desmosome junctions (By similarity) (PubMed:18079750, PubMed:29678907). May also play a role in the maintenance of DSG3 protein abundance in keratinocytes (PubMed:30949721). Required for the formation of DSP-containing desmosome precursors in the cytoplasm during desmosome assembly (By similarity). Also regulates the accumulation of CDH1 to mature desmosome junctions, via cAMP-dependent signaling and its interaction with activated RAP1A (By similarity). Positively regulates the stabilization of PKP2 mRNA and therefore protein abundance, via its interaction with FXR1, may also regulate the protein abundance of DSP via the same mechanism (PubMed:18079750). May also regulate the protein abundance of the desmosome component PKP1 (PubMed:18079750). Required for the organization of desmosome junctions at intercellular borders between basal keratinocytes of the epidermis, as a result plays a role in maintenance of the dermal barrier and regulation of the dermal inflammatory response (PubMed:18079750, PubMed:29678907). Required during epidermal keratinocyte differentiation for cell adherence at tricellular cell-cell contacts, via regulation of the timely formation of adherens junctions and desmosomes in a calcium-dependent manner, and may also play a role in the organization of the intracellular actin fiber belt (PubMed:27375112). Acts as a negative regulator of the inflammatory response in hematopoietic cells of the skin and intestine, via modulation of proinflammatory cytokine production (PubMed:26173741). Important for epithelial barrier maintenance in the intestine to reduce intestinal permeability, thereby plays a role in protection from intestinal-derived endotoxemia (PubMed:26173741). Required for the development of hair follicles, via a role in the regulation of inner root sheaf length, correct alignment and anterior-posterior polarity of hair follicles (PubMed:18079750). Promotes proliferation and cell-cycle G1/S phase transition of keratinocytes (PubMed:36689330). Promotes E2F1-driven transcription of G1/S phase promoting genes by acting to release E2F1 from its inhibitory interaction with RB1, via sequestering RB1 and CDKN1A to the cytoplasm and thereby increasing CDK4- and CDK6-driven phosphorylation of RB1 (PubMed:36689330). May act as a scaffold protein to facilitate MAPK phosphorylation of RPS6KA protein family members and subsequently promote downstream EGFR signaling (PubMed:36689330). May play a role in the positive regulation of transcription of Wnt-mediated TCF-responsive target genes (By similarity).</text>
</comment>
<comment type="subunit">
    <text evidence="1 9">Found in a complex composed of CDH1, RAP1A and PKP3; PKP3 acts as a scaffold protein within the complex, the complex is required for CDH1 localization to mature desmosome cell junctions (By similarity). Interacts with FXR1; the interaction facilitates the binding of PKP3 to PKP2 mRNA (By similarity). Interacts (via ARM repeats) with GSK3B; the interaction may be involved in PKP3 protein degradation (By similarity). Interacts with hyperphosphorylated and hypophosphorylated RB1; the interaction inhibits RB1 interaction with and repression of the transcription factor E2F1, potentially via sequestering RB1 to the cytoplasm (PubMed:36689330). Interacts with CDKN1A; the interaction sequesters CDKN1A to the cytoplasm thereby repressing its role as an inhibitor of CDK4- and CDK6-driven RB1 phosphorylation (PubMed:36689330). Interacts (via N-terminus) with SFN; the interaction maintains the cytoplasmic pool of PKP3, facilitates PKP3 exchange at desmosomes and restricts PKP3 localization to existing desmosome cell junctions (By similarity). Interacts (via N-terminus) with JUP; the interaction is required for PKP3 localization to desmosome cell-cell junctions (By similarity).</text>
</comment>
<comment type="subcellular location">
    <subcellularLocation>
        <location evidence="1">Nucleus</location>
    </subcellularLocation>
    <subcellularLocation>
        <location evidence="3 4 5 6 7 10">Cell junction</location>
        <location evidence="3 4 5 6 7 10">Desmosome</location>
    </subcellularLocation>
    <subcellularLocation>
        <location evidence="5 7">Cytoplasm</location>
    </subcellularLocation>
    <subcellularLocation>
        <location evidence="1">Cell membrane</location>
        <topology evidence="12">Peripheral membrane protein</topology>
    </subcellularLocation>
    <subcellularLocation>
        <location evidence="6">Cell junction</location>
        <location evidence="6">Adherens junction</location>
    </subcellularLocation>
    <text evidence="1 6">Translocates to the nucleus following canonical WNT signaling activation by WNT3A (By similarity). Maintains a cytoplasmic pool which can then be translocated to the desmosome, the cytoplasmic pool is maintained through PKP3 interaction with SFN (By similarity). Aberrant increases in translocation to the desmosome result in cell junction instability and therefore decreased cell adhesion (By similarity). Partially colocalizes at cell junctions in a zipper-like pattern with DSP, CDH1, CTNNB1 and CTNND1 in the early stages of keratinocyte differentiation (PubMed:27375112). Moves to cell junctions at tricellular contacts as differentiation progresses and as epithelial sheet formation completes (PubMed:27375112).</text>
</comment>
<comment type="alternative products">
    <event type="alternative splicing"/>
    <isoform>
        <id>Q9QY23-1</id>
        <name>1</name>
        <sequence type="displayed"/>
    </isoform>
    <isoform>
        <id>Q9QY23-2</id>
        <name>2</name>
        <sequence type="described" ref="VSP_026139"/>
    </isoform>
</comment>
<comment type="tissue specificity">
    <text evidence="3 4 6 9">Expressed in all layers of the epidermis, but is most abundant in the basal layer (at protein level) (PubMed:18079750). Expressed in keratinocytes of the epidermis at birth (at protein level) (PubMed:27375112). Expressed in the anagen non-keratinized inner root sheath cuticle and hair cuticle (at protein level) (PubMed:18079750). Also expressed in the matrix, precursors of the inner root sheath and hair shaft lineages (at protein level) (PubMed:18079750). Expressed at apical membranes in the outer hair root sheath and basal layer keratinocytes (at protein level) (PubMed:18079750). Expressed in intestinal epithelial cells and lamina propria of the ileum (at protein level) (PubMed:26173741). Expressed in keratinocytes (at protein level) (PubMed:36689330).</text>
</comment>
<comment type="developmental stage">
    <text evidence="5">Expressed in keratinocytes of newborn mice (at protein level).</text>
</comment>
<comment type="induction">
    <text evidence="4">Induced by bacterial lipopolysaccharide and phorbol myristate acetate in neutrophils.</text>
</comment>
<comment type="PTM">
    <text evidence="1">Phosphorylated at Ser-285 when localized to the cytoplasm, PKP3 at desmosome cell junctions is not phosphorylated (By similarity). Phosphorylation at Try-195 by SRC is induced by reactive oxygen species and potentially acts as a release mechanism from desmosome cell-cell junctions (By similarity).</text>
</comment>
<comment type="disruption phenotype">
    <text evidence="3 4 6 8 9">Knockout mice are viable, produced at the expected Mendelian ratio and appeared normal at birth (PubMed:18079750). Increase in protein abundance of Pkp1, Pkp2, Cdh1, Ctnna1 and Ctnnb1, and decrease in Jup protein abundance in the epidermis of newborn mice (PubMed:18079750). Delayed hair growth at P7, as a result of misaligned anterior-posterior polarity in hair follicles that show shortened inner root sheath and hair shafts with densely packed medullas lacking normal airspaces at P8 (PubMed:18079750). Disorganization or complete loss of desmosome cell-cell junctions in the epidermis and loss of Dsp expression in the basal layer of the outer root sheath and in the matrix cells surrounding the dermal papillae of the whisker follicles at P8 (PubMed:18079750). Acute dermatitis and 70% of mice develop sparse coats by three weeks of age, by two months of age 90% were almost bald on their ventral side (PubMed:18079750). Loss of the seal between intercellular borders between the basal cells of the epidermis, potentially as a result of loss of at least half of the lateral desmosomes at two months of age (PubMed:18079750). Reduces protein abundance of Dsg3 in keratinocytes (PubMed:30949721). Increases lethality in response to lipopolysaccharide-induced systemic inflammatory response syndrome (PubMed:26173741). Increase in mRNA expression of proinflammatory cytokines and chemokines Il6, Il1b, Tnf, Ifny, Il17a and Isyna1/iNos in the skin following PMA challenge and significant decreases in inflammatory gene expression such as Tnf and Il6 in lipopolysaccharide- or PMA-challenged neutrophils (PubMed:26173741). Delayed formation of adherens junctions and desmosome plaques during epidermal keratinocyte differentiation (PubMed:27375112). Differentiating keratinocytes also show an increase in Dsp protein abundance and failure to establish an organized actin belt (PubMed:27375112). Conditional knockout in intestinal epithelial cells shows no changes in survival, intestinal ulceration or cytokine production following dextran sulfate sodium (DSS)-induced colitis, however does show an increase in lethality following lipopolysaccharide-induced systemic inflammatory response syndrome (PubMed:26173741). Conditional knockout in hematopoietic cells show earlier development of more pronounced edema, extensive hemorrhage and intraepithelial edema are evident in skin sections of the ear (PubMed:26173741). Increase in mast cell numbers two hours post PMA challenge, followed by an increase in granulocyte numbers in the dermis and the epidermis (PubMed:26173741). Mice show a heightened proinflammatory state in response to lipopolysaccharide-induced systemic inflammatory response syndrome (PubMed:26173741). Following DSS-induced colitis these is an increase in weight loss, colon shortening, mucosal ulceration and macrophage infiltration (PubMed:26173741). Colonic supernatants show higher levels of Tnf, Il1b, Il6 and Il10 mRNA during colitis (PubMed:26173741). Increases keratinocyte proliferation in conditions that would usually result in density-dependent inhibition of growth, as a result of G1/S phase transition delay (PubMed:36689330). Decrease in total Egfr protein abundance and its phosphorylation, as a result an increase in downstream phosphorylation of Rps6ka family members (PubMed:36689330). Reduction in the proportion of hyperphosphorylated Rb1, an increase in the interaction between Rb1 and E2f1, resulting in an increase in nuclear Rb1 (PubMed:36689330). Increase in protein abundance and nuclear localization of Cdkn1a and an increase in Runx3 gene transcription (PubMed:36689330).</text>
</comment>
<comment type="similarity">
    <text evidence="12">Belongs to the beta-catenin family.</text>
</comment>
<sequence>MQEGNFLLSALQPETGVCSLALPSDLQLDRRGAEGPEADRLRAARVQEQVRARLLQLGQQSRHNGSAELDGSAESARGMPRGQYHTMQTGFSSRSQGMSGDKTSTFRPIAKPAYSPASWSSRSAVDLTCSRRLSSAHNGGSAFGAVGYGGTQPTPPMPTRPVSFHERGGAASRADYDTLSLRSLRLGPGGLDDRYSVVSEQLEPAAASTYRAYAYERQASSGSSRAGGLDWPEATEGPPSRTIRAPAMRTLQRFQSSHRSRGGTGSVSGAGLEPVARAPSVRSLSLSLADSGHLPDVRGLDSYTGHRTLQRLSSGFDDIDLPSAVKYLMASDPNLQVLGAAYIQHRCYSDAAAKKQARSLQAVPRLVKLFNHANQEVQRHATGAMRNLIYDNVDNKLALVEENGIFELLRTLREQDDELRKNVTGILWNLSSSDHLKDRLARDTLEQLTDLVLSPLSGAGGPPLIQQNASEAEIFYNATGFLRNLSSASQATRQKMRECHGLVDALVTYINHALDVGKCEDKSVENAVCVLRNLSYRLYDEMPPSALQRLEGRGRRDMAGAPPGEMVGCFTPQSRRLRELPLTADALTFAEVSKDPKGLEWLWSPQIVGLYNRLLQRCELNRHTTEAAAGALQNITAGDRRWAGVLSRLALEQERILNPLLDRVRTADHNQLRSLTGLIRNLSRNARNKDEMSTKVVSHLIEKLPGSVGEKCPPAEVLVNIIAVLNNLVVASPIAARDLLYFDGLRKLVFIKKKRDSPDSEKSSRAASSLLANLWQYSKLHRDFRAKGYRKEDFLGP</sequence>
<reference key="1">
    <citation type="journal article" date="1999" name="J. Cell Sci.">
        <title>Plakophilin-3, a novel armadillo-like protein present in nuclei and desmosomes of epithelial cells.</title>
        <authorList>
            <person name="Bonne S."/>
            <person name="van Hengel J."/>
            <person name="Nollet F."/>
            <person name="Kools P."/>
            <person name="van Roy F."/>
        </authorList>
    </citation>
    <scope>NUCLEOTIDE SEQUENCE [MRNA] (ISOFORM 1)</scope>
</reference>
<reference key="2">
    <citation type="journal article" date="2004" name="Genome Res.">
        <title>The status, quality, and expansion of the NIH full-length cDNA project: the Mammalian Gene Collection (MGC).</title>
        <authorList>
            <consortium name="The MGC Project Team"/>
        </authorList>
    </citation>
    <scope>NUCLEOTIDE SEQUENCE [LARGE SCALE MRNA] (ISOFORMS 1 AND 2)</scope>
    <source>
        <strain>C57BL/6J</strain>
        <strain>FVB/N</strain>
        <tissue>Colon</tissue>
        <tissue>Eye</tissue>
    </source>
</reference>
<reference key="3">
    <citation type="journal article" date="2007" name="Proc. Natl. Acad. Sci. U.S.A.">
        <title>Large-scale phosphorylation analysis of mouse liver.</title>
        <authorList>
            <person name="Villen J."/>
            <person name="Beausoleil S.A."/>
            <person name="Gerber S.A."/>
            <person name="Gygi S.P."/>
        </authorList>
    </citation>
    <scope>IDENTIFICATION BY MASS SPECTROMETRY [LARGE SCALE ANALYSIS]</scope>
    <source>
        <tissue>Liver</tissue>
    </source>
</reference>
<reference key="4">
    <citation type="journal article" date="2008" name="J. Invest. Dermatol.">
        <title>Plakophilin-3-deficient mice develop hair coat abnormalities and are prone to cutaneous inflammation.</title>
        <authorList>
            <person name="Sklyarova T."/>
            <person name="Bonne S."/>
            <person name="D'Hooge P."/>
            <person name="Denecker G."/>
            <person name="Goossens S."/>
            <person name="De Rycke R."/>
            <person name="Borgonie G."/>
            <person name="Boesl M."/>
            <person name="van Roy F."/>
            <person name="van Hengel J."/>
        </authorList>
    </citation>
    <scope>FUNCTION</scope>
    <scope>SUBCELLULAR LOCATION</scope>
    <scope>TISSUE SPECIFICITY</scope>
    <scope>DISRUPTION PHENOTYPE</scope>
</reference>
<reference key="5">
    <citation type="journal article" date="2010" name="Cell">
        <title>A tissue-specific atlas of mouse protein phosphorylation and expression.</title>
        <authorList>
            <person name="Huttlin E.L."/>
            <person name="Jedrychowski M.P."/>
            <person name="Elias J.E."/>
            <person name="Goswami T."/>
            <person name="Rad R."/>
            <person name="Beausoleil S.A."/>
            <person name="Villen J."/>
            <person name="Haas W."/>
            <person name="Sowa M.E."/>
            <person name="Gygi S.P."/>
        </authorList>
    </citation>
    <scope>PHOSPHORYLATION [LARGE SCALE ANALYSIS] AT SER-123; SER-180 AND SER-331</scope>
    <scope>IDENTIFICATION BY MASS SPECTROMETRY [LARGE SCALE ANALYSIS]</scope>
    <source>
        <tissue>Brown adipose tissue</tissue>
        <tissue>Kidney</tissue>
        <tissue>Lung</tissue>
        <tissue>Pancreas</tissue>
    </source>
</reference>
<reference key="6">
    <citation type="journal article" date="2014" name="Mol. Cell. Proteomics">
        <title>Immunoaffinity enrichment and mass spectrometry analysis of protein methylation.</title>
        <authorList>
            <person name="Guo A."/>
            <person name="Gu H."/>
            <person name="Zhou J."/>
            <person name="Mulhern D."/>
            <person name="Wang Y."/>
            <person name="Lee K.A."/>
            <person name="Yang V."/>
            <person name="Aguiar M."/>
            <person name="Kornhauser J."/>
            <person name="Jia X."/>
            <person name="Ren J."/>
            <person name="Beausoleil S.A."/>
            <person name="Silva J.C."/>
            <person name="Vemulapalli V."/>
            <person name="Bedford M.T."/>
            <person name="Comb M.J."/>
        </authorList>
    </citation>
    <scope>METHYLATION [LARGE SCALE ANALYSIS] AT ARG-261</scope>
    <scope>IDENTIFICATION BY MASS SPECTROMETRY [LARGE SCALE ANALYSIS]</scope>
    <source>
        <tissue>Embryo</tissue>
    </source>
</reference>
<reference key="7">
    <citation type="journal article" date="2015" name="Eur. J. Immunol.">
        <title>Hematopoietic plakophilin-3 regulates acute tissue-specific and systemic inflammation in mice.</title>
        <authorList>
            <person name="Sklyarova T."/>
            <person name="van Hengel J."/>
            <person name="Van Wonterghem E."/>
            <person name="Libert C."/>
            <person name="van Roy F."/>
            <person name="Vandenbroucke R.E."/>
        </authorList>
    </citation>
    <scope>FUNCTION</scope>
    <scope>SUBCELLULAR LOCATION</scope>
    <scope>TISSUE SPECIFICITY</scope>
    <scope>INDUCTION</scope>
    <scope>DISRUPTION PHENOTYPE</scope>
</reference>
<reference key="8">
    <citation type="journal article" date="2016" name="J. Invest. Dermatol.">
        <title>Growth Retardation, Loss of Desmosomal Adhesion, and Impaired Tight Junction Function Identify a Unique Role of Plakophilin 1 In Vivo.</title>
        <authorList>
            <person name="Rietscher K."/>
            <person name="Wolf A."/>
            <person name="Hause G."/>
            <person name="Rother A."/>
            <person name="Keil R."/>
            <person name="Magin T.M."/>
            <person name="Glass M."/>
            <person name="Niessen C.M."/>
            <person name="Hatzfeld M."/>
        </authorList>
    </citation>
    <scope>SUBCELLULAR LOCATION</scope>
    <scope>DEVELOPMENTAL STAGE</scope>
</reference>
<reference key="9">
    <citation type="journal article" date="2016" name="J. Invest. Dermatol.">
        <title>Antagonistic Regulation of Intercellular Cohesion by Plakophilins 1 and 3.</title>
        <authorList>
            <person name="Keil R."/>
            <person name="Rietscher K."/>
            <person name="Hatzfeld M."/>
        </authorList>
    </citation>
    <scope>FUNCTION</scope>
    <scope>SUBCELLULAR LOCATION</scope>
    <scope>TISSUE SPECIFICITY</scope>
    <scope>DISRUPTION PHENOTYPE</scope>
</reference>
<reference key="10">
    <citation type="journal article" date="2018" name="J. Cell Sci.">
        <title>14-3-3 proteins regulate desmosomal adhesion via plakophilins.</title>
        <authorList>
            <person name="Rietscher K."/>
            <person name="Keil R."/>
            <person name="Jordan A."/>
            <person name="Hatzfeld M."/>
        </authorList>
    </citation>
    <scope>FUNCTION</scope>
    <scope>SUBCELLULAR LOCATION</scope>
</reference>
<reference key="11">
    <citation type="journal article" date="2019" name="Cell. Mol. Life Sci.">
        <title>Plakophilin 1 but not plakophilin 3 regulates desmoglein clustering.</title>
        <authorList>
            <person name="Fuchs M."/>
            <person name="Foresti M."/>
            <person name="Radeva M.Y."/>
            <person name="Kugelmann D."/>
            <person name="Keil R."/>
            <person name="Hatzfeld M."/>
            <person name="Spindler V."/>
            <person name="Waschke J."/>
            <person name="Vielmuth F."/>
        </authorList>
    </citation>
    <scope>FUNCTION</scope>
    <scope>DISRUPTION PHENOTYPE</scope>
</reference>
<reference key="12">
    <citation type="journal article" date="2023" name="Cell Rep.">
        <title>Plakophilin 3 facilitates G1/S phase transition and enhances proliferation by capturing RB protein in the cytoplasm and promoting EGFR signaling.</title>
        <authorList>
            <person name="Mueller L."/>
            <person name="Keil R."/>
            <person name="Hatzfeld M."/>
        </authorList>
    </citation>
    <scope>FUNCTION</scope>
    <scope>INTERACTION WITH RB1 AND CDKN1A</scope>
    <scope>TISSUE SPECIFICITY</scope>
    <scope>DISRUPTION PHENOTYPE</scope>
</reference>
<reference key="13">
    <citation type="journal article" date="2024" name="Kidney Int.">
        <title>The role of desmoglein-2 in kidney disease.</title>
        <authorList>
            <person name="Xu T."/>
            <person name="Herkens L."/>
            <person name="Jia T."/>
            <person name="Klinkhammer B.M."/>
            <person name="Kant S."/>
            <person name="Krusche C.A."/>
            <person name="Buhl E.M."/>
            <person name="Hayat S."/>
            <person name="Floege J."/>
            <person name="Strnad P."/>
            <person name="Kramann R."/>
            <person name="Djudjaj S."/>
            <person name="Boor P."/>
        </authorList>
    </citation>
    <scope>SUBCELLULAR LOCATION</scope>
</reference>
<organism>
    <name type="scientific">Mus musculus</name>
    <name type="common">Mouse</name>
    <dbReference type="NCBI Taxonomy" id="10090"/>
    <lineage>
        <taxon>Eukaryota</taxon>
        <taxon>Metazoa</taxon>
        <taxon>Chordata</taxon>
        <taxon>Craniata</taxon>
        <taxon>Vertebrata</taxon>
        <taxon>Euteleostomi</taxon>
        <taxon>Mammalia</taxon>
        <taxon>Eutheria</taxon>
        <taxon>Euarchontoglires</taxon>
        <taxon>Glires</taxon>
        <taxon>Rodentia</taxon>
        <taxon>Myomorpha</taxon>
        <taxon>Muroidea</taxon>
        <taxon>Muridae</taxon>
        <taxon>Murinae</taxon>
        <taxon>Mus</taxon>
        <taxon>Mus</taxon>
    </lineage>
</organism>